<organism>
    <name type="scientific">Saccharomyces cerevisiae (strain ATCC 204508 / S288c)</name>
    <name type="common">Baker's yeast</name>
    <dbReference type="NCBI Taxonomy" id="559292"/>
    <lineage>
        <taxon>Eukaryota</taxon>
        <taxon>Fungi</taxon>
        <taxon>Dikarya</taxon>
        <taxon>Ascomycota</taxon>
        <taxon>Saccharomycotina</taxon>
        <taxon>Saccharomycetes</taxon>
        <taxon>Saccharomycetales</taxon>
        <taxon>Saccharomycetaceae</taxon>
        <taxon>Saccharomyces</taxon>
    </lineage>
</organism>
<name>YIR4_YEAST</name>
<comment type="similarity">
    <text evidence="1">Belongs to the UPF0377 family.</text>
</comment>
<comment type="caution">
    <text evidence="2">Product of a dubious gene prediction unlikely to encode a functional protein. Because of that it is not part of the S.cerevisiae S288c complete/reference proteome set.</text>
</comment>
<reference key="1">
    <citation type="journal article" date="1997" name="Nature">
        <title>The nucleotide sequence of Saccharomyces cerevisiae chromosome IX.</title>
        <authorList>
            <person name="Churcher C.M."/>
            <person name="Bowman S."/>
            <person name="Badcock K."/>
            <person name="Bankier A.T."/>
            <person name="Brown D."/>
            <person name="Chillingworth T."/>
            <person name="Connor R."/>
            <person name="Devlin K."/>
            <person name="Gentles S."/>
            <person name="Hamlin N."/>
            <person name="Harris D.E."/>
            <person name="Horsnell T."/>
            <person name="Hunt S."/>
            <person name="Jagels K."/>
            <person name="Jones M."/>
            <person name="Lye G."/>
            <person name="Moule S."/>
            <person name="Odell C."/>
            <person name="Pearson D."/>
            <person name="Rajandream M.A."/>
            <person name="Rice P."/>
            <person name="Rowley N."/>
            <person name="Skelton J."/>
            <person name="Smith V."/>
            <person name="Walsh S.V."/>
            <person name="Whitehead S."/>
            <person name="Barrell B.G."/>
        </authorList>
    </citation>
    <scope>NUCLEOTIDE SEQUENCE [LARGE SCALE GENOMIC DNA]</scope>
    <source>
        <strain>ATCC 204508 / S288c</strain>
    </source>
</reference>
<reference key="2">
    <citation type="journal article" date="2014" name="G3 (Bethesda)">
        <title>The reference genome sequence of Saccharomyces cerevisiae: Then and now.</title>
        <authorList>
            <person name="Engel S.R."/>
            <person name="Dietrich F.S."/>
            <person name="Fisk D.G."/>
            <person name="Binkley G."/>
            <person name="Balakrishnan R."/>
            <person name="Costanzo M.C."/>
            <person name="Dwight S.S."/>
            <person name="Hitz B.C."/>
            <person name="Karra K."/>
            <person name="Nash R.S."/>
            <person name="Weng S."/>
            <person name="Wong E.D."/>
            <person name="Lloyd P."/>
            <person name="Skrzypek M.S."/>
            <person name="Miyasato S.R."/>
            <person name="Simison M."/>
            <person name="Cherry J.M."/>
        </authorList>
    </citation>
    <scope>GENOME REANNOTATION</scope>
    <source>
        <strain>ATCC 204508 / S288c</strain>
    </source>
</reference>
<protein>
    <recommendedName>
        <fullName>Putative UPF0377 protein YIL174W</fullName>
    </recommendedName>
</protein>
<accession>P0CL25</accession>
<accession>P40437</accession>
<accession>Q547K6</accession>
<feature type="chain" id="PRO_0000202950" description="Putative UPF0377 protein YIL174W">
    <location>
        <begin position="1"/>
        <end position="75"/>
    </location>
</feature>
<proteinExistence type="uncertain"/>
<sequence length="75" mass="8646">MPIIGVPRCLEKPFCAPAKFPFSVKKNIRILDLDPRTEAYCLSLNSVCSKRLPCKKYFYLLNSYNIKRVLGVVYC</sequence>
<evidence type="ECO:0000305" key="1"/>
<evidence type="ECO:0000305" key="2">
    <source>
    </source>
</evidence>
<gene>
    <name type="ordered locus">YIL174W</name>
</gene>
<dbReference type="EMBL" id="Z46921">
    <property type="protein sequence ID" value="CAA87018.1"/>
    <property type="molecule type" value="Genomic_DNA"/>
</dbReference>
<dbReference type="PIR" id="S50353">
    <property type="entry name" value="S50353"/>
</dbReference>
<dbReference type="STRING" id="4932.YJL222W-A"/>
<dbReference type="PaxDb" id="4932-YJL222W-A"/>
<dbReference type="EnsemblFungi" id="YJL222W-A_mRNA">
    <property type="protein sequence ID" value="YJL222W-A"/>
    <property type="gene ID" value="YJL222W-A"/>
</dbReference>
<dbReference type="AGR" id="SGD:S000001436"/>
<dbReference type="SGD" id="S000001436">
    <property type="gene designation" value="YIL174W"/>
</dbReference>
<dbReference type="HOGENOM" id="CLU_183954_0_0_1"/>